<organism evidence="9">
    <name type="scientific">Arabidopsis thaliana</name>
    <name type="common">Mouse-ear cress</name>
    <dbReference type="NCBI Taxonomy" id="3702"/>
    <lineage>
        <taxon>Eukaryota</taxon>
        <taxon>Viridiplantae</taxon>
        <taxon>Streptophyta</taxon>
        <taxon>Embryophyta</taxon>
        <taxon>Tracheophyta</taxon>
        <taxon>Spermatophyta</taxon>
        <taxon>Magnoliopsida</taxon>
        <taxon>eudicotyledons</taxon>
        <taxon>Gunneridae</taxon>
        <taxon>Pentapetalae</taxon>
        <taxon>rosids</taxon>
        <taxon>malvids</taxon>
        <taxon>Brassicales</taxon>
        <taxon>Brassicaceae</taxon>
        <taxon>Camelineae</taxon>
        <taxon>Arabidopsis</taxon>
    </lineage>
</organism>
<evidence type="ECO:0000250" key="1">
    <source>
        <dbReference type="UniProtKB" id="Q55DL0"/>
    </source>
</evidence>
<evidence type="ECO:0000250" key="2">
    <source>
        <dbReference type="UniProtKB" id="Q9P903"/>
    </source>
</evidence>
<evidence type="ECO:0000269" key="3">
    <source>
    </source>
</evidence>
<evidence type="ECO:0000269" key="4">
    <source>
    </source>
</evidence>
<evidence type="ECO:0000303" key="5">
    <source>
    </source>
</evidence>
<evidence type="ECO:0000305" key="6"/>
<evidence type="ECO:0000312" key="7">
    <source>
        <dbReference type="Araport" id="AT5G12200"/>
    </source>
</evidence>
<evidence type="ECO:0000312" key="8">
    <source>
        <dbReference type="EMBL" id="BAB10038.1"/>
    </source>
</evidence>
<evidence type="ECO:0000312" key="9">
    <source>
        <dbReference type="Proteomes" id="UP000006548"/>
    </source>
</evidence>
<name>DPYS_ARATH</name>
<accession>Q9FMP3</accession>
<protein>
    <recommendedName>
        <fullName evidence="5">Dihydropyrimidinase</fullName>
        <ecNumber evidence="4">3.5.2.2</ecNumber>
    </recommendedName>
    <alternativeName>
        <fullName evidence="5">Dihydropyrimidine amidohydrolase</fullName>
    </alternativeName>
    <alternativeName>
        <fullName evidence="5">Protein PYRIMIDINE 2</fullName>
    </alternativeName>
</protein>
<proteinExistence type="evidence at protein level"/>
<sequence length="531" mass="57991">MALDAFFFIVSLFLLFPSPSASESTTQFCSAGRENGVGSCGVSSTRILIKGGTVVNAHHQELADVYVENGIIVAVQPNIKVGDEVTVLDATGKFVMPGGIDPHTHLAMEFMGTETIDDFFSGQAAALAGGTTMHIDFVIPVNGNLVAGFEAYENKSRESCMDYGFHMAITKWDEGVSRDMEMLVKEKGINSFKFFLAYKGSLMVTDDLLLEGLKRCKSLGALAMVHAENGDAVFEGQKRMIELGITGPEGHALSRPPVLEGEATARAIRLARFINTPLYVVHVMSVDAMDEIAKARKSGQKVIGEPVVSGLILDDHWLWDPDFTIASKYVMSPPIRPVGHGKALQDALSTGILQLVGTDHCTFNSTQKALGLDDFRRIPNGVNGLEERMHLIWDTMVESGQLSATDYVRITSTECARIFNIYPRKGAILAGSDADIIILNPNSSYEISSKSHHSRSDTNVYEGRRGKGKVEVTIAGGRIVWENEELKVVPRSGKYIEMPPFSYLFDGIEKSDANYLSSLRAPVKRVRTEAT</sequence>
<keyword id="KW-0256">Endoplasmic reticulum</keyword>
<keyword id="KW-0378">Hydrolase</keyword>
<keyword id="KW-0479">Metal-binding</keyword>
<keyword id="KW-1185">Reference proteome</keyword>
<keyword id="KW-0862">Zinc</keyword>
<feature type="chain" id="PRO_0000432455" description="Dihydropyrimidinase">
    <location>
        <begin position="1"/>
        <end position="531"/>
    </location>
</feature>
<feature type="binding site" evidence="2">
    <location>
        <position position="103"/>
    </location>
    <ligand>
        <name>Zn(2+)</name>
        <dbReference type="ChEBI" id="CHEBI:29105"/>
        <label>1</label>
    </ligand>
</feature>
<feature type="binding site" evidence="2">
    <location>
        <position position="105"/>
    </location>
    <ligand>
        <name>Zn(2+)</name>
        <dbReference type="ChEBI" id="CHEBI:29105"/>
        <label>1</label>
    </ligand>
</feature>
<feature type="binding site" description="via carbamate group" evidence="2">
    <location>
        <position position="193"/>
    </location>
    <ligand>
        <name>Zn(2+)</name>
        <dbReference type="ChEBI" id="CHEBI:29105"/>
        <label>1</label>
    </ligand>
</feature>
<feature type="binding site" description="via carbamate group" evidence="2">
    <location>
        <position position="193"/>
    </location>
    <ligand>
        <name>Zn(2+)</name>
        <dbReference type="ChEBI" id="CHEBI:29105"/>
        <label>2</label>
    </ligand>
</feature>
<feature type="binding site" evidence="2">
    <location>
        <position position="198"/>
    </location>
    <ligand>
        <name>substrate</name>
    </ligand>
</feature>
<feature type="binding site" evidence="2">
    <location>
        <position position="226"/>
    </location>
    <ligand>
        <name>Zn(2+)</name>
        <dbReference type="ChEBI" id="CHEBI:29105"/>
        <label>2</label>
    </ligand>
</feature>
<feature type="binding site" evidence="2">
    <location>
        <position position="282"/>
    </location>
    <ligand>
        <name>Zn(2+)</name>
        <dbReference type="ChEBI" id="CHEBI:29105"/>
        <label>2</label>
    </ligand>
</feature>
<feature type="binding site" evidence="2">
    <location>
        <position position="332"/>
    </location>
    <ligand>
        <name>substrate</name>
    </ligand>
</feature>
<feature type="binding site" evidence="2">
    <location>
        <position position="359"/>
    </location>
    <ligand>
        <name>Zn(2+)</name>
        <dbReference type="ChEBI" id="CHEBI:29105"/>
        <label>1</label>
    </ligand>
</feature>
<feature type="binding site" evidence="2">
    <location>
        <position position="380"/>
    </location>
    <ligand>
        <name>substrate</name>
    </ligand>
</feature>
<feature type="modified residue" description="N6-carboxylysine" evidence="2">
    <location>
        <position position="193"/>
    </location>
</feature>
<gene>
    <name evidence="5" type="primary">PYD2</name>
    <name evidence="7" type="ordered locus">At5g12200</name>
    <name evidence="8" type="ORF">MXC9.16</name>
</gene>
<comment type="function">
    <text evidence="3 4">Catalyzes the second step of the reductive pyrimidine degradation, the reversible hydrolytic ring opening of dihydropyrimidines. Can catalyze the ring opening of 5,6-dihydrouracil to N-carbamoyl-alanine and of 5,6-dihydrothymine to N-carbamoyl-amino isobutyrate. Involved in the recycling of nitrogen from nucleobases to general nitrogen metabolism.</text>
</comment>
<comment type="catalytic activity">
    <reaction evidence="4">
        <text>5,6-dihydrouracil + H2O = 3-(carbamoylamino)propanoate + H(+)</text>
        <dbReference type="Rhea" id="RHEA:16121"/>
        <dbReference type="ChEBI" id="CHEBI:11892"/>
        <dbReference type="ChEBI" id="CHEBI:15377"/>
        <dbReference type="ChEBI" id="CHEBI:15378"/>
        <dbReference type="ChEBI" id="CHEBI:15901"/>
        <dbReference type="EC" id="3.5.2.2"/>
    </reaction>
</comment>
<comment type="cofactor">
    <cofactor evidence="2">
        <name>Zn(2+)</name>
        <dbReference type="ChEBI" id="CHEBI:29105"/>
    </cofactor>
    <text evidence="2">Binds 2 Zn(2+) ions per subunit.</text>
</comment>
<comment type="pathway">
    <text evidence="6">Amino-acid biosynthesis; beta-alanine biosynthesis.</text>
</comment>
<comment type="subunit">
    <text evidence="1">Homotetramer.</text>
</comment>
<comment type="subcellular location">
    <subcellularLocation>
        <location evidence="4">Endoplasmic reticulum</location>
    </subcellularLocation>
</comment>
<comment type="developmental stage">
    <text evidence="4">Up-regulated between days 3 and 12 after germination and during senescence.</text>
</comment>
<comment type="induction">
    <text evidence="4">Up-regulated by nitrogen limitation.</text>
</comment>
<comment type="PTM">
    <text evidence="2">Carboxylation allows a single lysine to coordinate two zinc ions.</text>
</comment>
<comment type="disruption phenotype">
    <text evidence="4">No visible phenotype, but unable to grow on uracil as sole nitrogen source.</text>
</comment>
<comment type="similarity">
    <text evidence="6">Belongs to the metallo-dependent hydrolases superfamily. Hydantoinase/dihydropyrimidinase family.</text>
</comment>
<dbReference type="EC" id="3.5.2.2" evidence="4"/>
<dbReference type="EMBL" id="AF465755">
    <property type="protein sequence ID" value="AAO33381.1"/>
    <property type="molecule type" value="mRNA"/>
</dbReference>
<dbReference type="EMBL" id="AB007727">
    <property type="protein sequence ID" value="BAB10038.1"/>
    <property type="molecule type" value="Genomic_DNA"/>
</dbReference>
<dbReference type="EMBL" id="CP002688">
    <property type="protein sequence ID" value="AED91773.1"/>
    <property type="molecule type" value="Genomic_DNA"/>
</dbReference>
<dbReference type="RefSeq" id="NP_568258.2">
    <property type="nucleotide sequence ID" value="NM_121258.4"/>
</dbReference>
<dbReference type="SMR" id="Q9FMP3"/>
<dbReference type="FunCoup" id="Q9FMP3">
    <property type="interactions" value="1029"/>
</dbReference>
<dbReference type="IntAct" id="Q9FMP3">
    <property type="interactions" value="1"/>
</dbReference>
<dbReference type="STRING" id="3702.Q9FMP3"/>
<dbReference type="MEROPS" id="M38.973"/>
<dbReference type="iPTMnet" id="Q9FMP3"/>
<dbReference type="PaxDb" id="3702-AT5G12200.1"/>
<dbReference type="ProteomicsDB" id="241253"/>
<dbReference type="EnsemblPlants" id="AT5G12200.1">
    <property type="protein sequence ID" value="AT5G12200.1"/>
    <property type="gene ID" value="AT5G12200"/>
</dbReference>
<dbReference type="GeneID" id="831093"/>
<dbReference type="Gramene" id="AT5G12200.1">
    <property type="protein sequence ID" value="AT5G12200.1"/>
    <property type="gene ID" value="AT5G12200"/>
</dbReference>
<dbReference type="KEGG" id="ath:AT5G12200"/>
<dbReference type="Araport" id="AT5G12200"/>
<dbReference type="TAIR" id="AT5G12200">
    <property type="gene designation" value="PYD2"/>
</dbReference>
<dbReference type="eggNOG" id="KOG2584">
    <property type="taxonomic scope" value="Eukaryota"/>
</dbReference>
<dbReference type="HOGENOM" id="CLU_015572_2_1_1"/>
<dbReference type="InParanoid" id="Q9FMP3"/>
<dbReference type="OMA" id="SAETHHM"/>
<dbReference type="PhylomeDB" id="Q9FMP3"/>
<dbReference type="BioCyc" id="MetaCyc:AT5G12200-MONOMER"/>
<dbReference type="BRENDA" id="3.5.2.2">
    <property type="organism ID" value="399"/>
</dbReference>
<dbReference type="UniPathway" id="UPA00131"/>
<dbReference type="PRO" id="PR:Q9FMP3"/>
<dbReference type="Proteomes" id="UP000006548">
    <property type="component" value="Chromosome 5"/>
</dbReference>
<dbReference type="ExpressionAtlas" id="Q9FMP3">
    <property type="expression patterns" value="baseline and differential"/>
</dbReference>
<dbReference type="GO" id="GO:0012505">
    <property type="term" value="C:endomembrane system"/>
    <property type="evidence" value="ECO:0000314"/>
    <property type="project" value="TAIR"/>
</dbReference>
<dbReference type="GO" id="GO:0005783">
    <property type="term" value="C:endoplasmic reticulum"/>
    <property type="evidence" value="ECO:0007005"/>
    <property type="project" value="TAIR"/>
</dbReference>
<dbReference type="GO" id="GO:0005794">
    <property type="term" value="C:Golgi apparatus"/>
    <property type="evidence" value="ECO:0007005"/>
    <property type="project" value="TAIR"/>
</dbReference>
<dbReference type="GO" id="GO:0009536">
    <property type="term" value="C:plastid"/>
    <property type="evidence" value="ECO:0007005"/>
    <property type="project" value="TAIR"/>
</dbReference>
<dbReference type="GO" id="GO:0004157">
    <property type="term" value="F:dihydropyrimidinase activity"/>
    <property type="evidence" value="ECO:0000316"/>
    <property type="project" value="TAIR"/>
</dbReference>
<dbReference type="GO" id="GO:0046872">
    <property type="term" value="F:metal ion binding"/>
    <property type="evidence" value="ECO:0007669"/>
    <property type="project" value="UniProtKB-KW"/>
</dbReference>
<dbReference type="GO" id="GO:0019483">
    <property type="term" value="P:beta-alanine biosynthetic process"/>
    <property type="evidence" value="ECO:0007669"/>
    <property type="project" value="UniProtKB-UniPathway"/>
</dbReference>
<dbReference type="GO" id="GO:0043562">
    <property type="term" value="P:cellular response to nitrogen levels"/>
    <property type="evidence" value="ECO:0000270"/>
    <property type="project" value="TAIR"/>
</dbReference>
<dbReference type="GO" id="GO:0006212">
    <property type="term" value="P:uracil catabolic process"/>
    <property type="evidence" value="ECO:0000315"/>
    <property type="project" value="TAIR"/>
</dbReference>
<dbReference type="CDD" id="cd01314">
    <property type="entry name" value="D-HYD"/>
    <property type="match status" value="1"/>
</dbReference>
<dbReference type="FunFam" id="3.20.20.140:FF:000001">
    <property type="entry name" value="Dihydropyrimidinase like 3"/>
    <property type="match status" value="1"/>
</dbReference>
<dbReference type="Gene3D" id="3.20.20.140">
    <property type="entry name" value="Metal-dependent hydrolases"/>
    <property type="match status" value="1"/>
</dbReference>
<dbReference type="Gene3D" id="2.30.40.10">
    <property type="entry name" value="Urease, subunit C, domain 1"/>
    <property type="match status" value="1"/>
</dbReference>
<dbReference type="InterPro" id="IPR006680">
    <property type="entry name" value="Amidohydro-rel"/>
</dbReference>
<dbReference type="InterPro" id="IPR011778">
    <property type="entry name" value="Hydantoinase/dihydroPyrase"/>
</dbReference>
<dbReference type="InterPro" id="IPR011059">
    <property type="entry name" value="Metal-dep_hydrolase_composite"/>
</dbReference>
<dbReference type="InterPro" id="IPR032466">
    <property type="entry name" value="Metal_Hydrolase"/>
</dbReference>
<dbReference type="InterPro" id="IPR050378">
    <property type="entry name" value="Metallo-dep_Hydrolases_sf"/>
</dbReference>
<dbReference type="NCBIfam" id="TIGR02033">
    <property type="entry name" value="D-hydantoinase"/>
    <property type="match status" value="1"/>
</dbReference>
<dbReference type="PANTHER" id="PTHR11647:SF1">
    <property type="entry name" value="COLLAPSIN RESPONSE MEDIATOR PROTEIN"/>
    <property type="match status" value="1"/>
</dbReference>
<dbReference type="PANTHER" id="PTHR11647">
    <property type="entry name" value="HYDRANTOINASE/DIHYDROPYRIMIDINASE FAMILY MEMBER"/>
    <property type="match status" value="1"/>
</dbReference>
<dbReference type="Pfam" id="PF01979">
    <property type="entry name" value="Amidohydro_1"/>
    <property type="match status" value="1"/>
</dbReference>
<dbReference type="SUPFAM" id="SSF51338">
    <property type="entry name" value="Composite domain of metallo-dependent hydrolases"/>
    <property type="match status" value="1"/>
</dbReference>
<dbReference type="SUPFAM" id="SSF51556">
    <property type="entry name" value="Metallo-dependent hydrolases"/>
    <property type="match status" value="1"/>
</dbReference>
<reference key="1">
    <citation type="journal article" date="2003" name="Nucleic Acids Res.">
        <title>Dihydropyrimidine amidohydrolases and dihydroorotases share the same origin and several enzymatic properties.</title>
        <authorList>
            <person name="Gojkovic Z."/>
            <person name="Rislund L."/>
            <person name="Andersen B."/>
            <person name="Sandrini M.P."/>
            <person name="Cook P.F."/>
            <person name="Schnackerz K.D."/>
            <person name="Piskur J."/>
        </authorList>
    </citation>
    <scope>NUCLEOTIDE SEQUENCE [MRNA]</scope>
    <scope>FUNCTION</scope>
</reference>
<reference key="2">
    <citation type="journal article" date="1997" name="DNA Res.">
        <title>Structural analysis of Arabidopsis thaliana chromosome 5. III. Sequence features of the regions of 1,191,918 bp covered by seventeen physically assigned P1 clones.</title>
        <authorList>
            <person name="Nakamura Y."/>
            <person name="Sato S."/>
            <person name="Kaneko T."/>
            <person name="Kotani H."/>
            <person name="Asamizu E."/>
            <person name="Miyajima N."/>
            <person name="Tabata S."/>
        </authorList>
    </citation>
    <scope>NUCLEOTIDE SEQUENCE [LARGE SCALE GENOMIC DNA]</scope>
    <source>
        <strain>cv. Columbia</strain>
    </source>
</reference>
<reference key="3">
    <citation type="journal article" date="2017" name="Plant J.">
        <title>Araport11: a complete reannotation of the Arabidopsis thaliana reference genome.</title>
        <authorList>
            <person name="Cheng C.Y."/>
            <person name="Krishnakumar V."/>
            <person name="Chan A.P."/>
            <person name="Thibaud-Nissen F."/>
            <person name="Schobel S."/>
            <person name="Town C.D."/>
        </authorList>
    </citation>
    <scope>GENOME REANNOTATION</scope>
    <source>
        <strain>cv. Columbia</strain>
    </source>
</reference>
<reference key="4">
    <citation type="journal article" date="2009" name="New Phytol.">
        <title>A functional analysis of the pyrimidine catabolic pathway in Arabidopsis.</title>
        <authorList>
            <person name="Zrenner R."/>
            <person name="Riegler H."/>
            <person name="Marquard C.R."/>
            <person name="Lange P.R."/>
            <person name="Geserick C."/>
            <person name="Bartosz C.E."/>
            <person name="Chen C.T."/>
            <person name="Slocum R.D."/>
        </authorList>
    </citation>
    <scope>FUNCTION</scope>
    <scope>CATALYTIC ACTIVITY</scope>
    <scope>DEVELOPMENTAL STAGE</scope>
    <scope>INDUCTION BY NITROGEN LIMITATION</scope>
    <scope>SUBCELLULAR LOCATION</scope>
    <scope>DISRUPTION PHENOTYPE</scope>
    <source>
        <strain>cv. Columbia</strain>
    </source>
</reference>